<evidence type="ECO:0000250" key="1"/>
<evidence type="ECO:0000255" key="2">
    <source>
        <dbReference type="PROSITE-ProRule" id="PRU10088"/>
    </source>
</evidence>
<evidence type="ECO:0000255" key="3">
    <source>
        <dbReference type="PROSITE-ProRule" id="PRU10089"/>
    </source>
</evidence>
<evidence type="ECO:0000305" key="4"/>
<reference key="1">
    <citation type="journal article" date="1997" name="J. Bacteriol.">
        <title>Characterization of a thiol-dependent endopeptidase from Lactobacillus helveticus CNRZ32.</title>
        <authorList>
            <person name="Fenster K.M."/>
            <person name="Parkin K.L."/>
            <person name="Steele J.L."/>
        </authorList>
    </citation>
    <scope>NUCLEOTIDE SEQUENCE [GENOMIC DNA]</scope>
    <source>
        <strain>CNRZ 32</strain>
    </source>
</reference>
<comment type="function">
    <text>Can hydrolyze internal peptide bonds in Met-enkephalin and bradykinin; however, hydrolysis of alpha-, beta-, and kappa-caseins is not detected.</text>
</comment>
<comment type="biophysicochemical properties">
    <phDependence>
        <text>Optimum pH is 4.5.</text>
    </phDependence>
    <temperatureDependence>
        <text>Optimum temperature is 32-37 degrees Celsius.</text>
    </temperatureDependence>
</comment>
<comment type="subcellular location">
    <subcellularLocation>
        <location evidence="4">Cytoplasm</location>
    </subcellularLocation>
</comment>
<comment type="similarity">
    <text evidence="2 3">Belongs to the peptidase C1 family.</text>
</comment>
<sequence>MAHELTVQELEKFSADFNKNPKNKVVARAAQRSGVLEASYNDRVQSELTRVFSTELDTDNVTNQKHSGRCWLFATLNVLRHEFGKKYKAKDFTFSQAYNFFWDKIERANMFYNRILDSADMPLDSRQVKTDLDFAGTDGGQFQMAAALVEKYGVVPSYAMPETFNTNDTTGFATALGDKLKKDALVLRKLKQEGKDDEIKKTREKFLSEVYQMTAIAVGEPPKKFDLEYRDDDKKYHLEKDLTPLEFLHKYLGGVDFDDYVVLTNAPDHEYDKLYGLPAEDNVSGSIRIKLLNVPMEYLTAASIAQLKDGEAVWFGNDVLRQMDRKTGYLDTNLYKLDDLFGVDLKMSKADRLKTGVGEVSHAMTLVGVDEDNGEVRQWKVENSWGDKSGAKGYYVMNNEWFNDYVYEVVVHKKYLTDKQKELAEGPITDLPAWDSLA</sequence>
<accession>P94870</accession>
<organism>
    <name type="scientific">Lactobacillus helveticus</name>
    <name type="common">Lactobacillus suntoryeus</name>
    <dbReference type="NCBI Taxonomy" id="1587"/>
    <lineage>
        <taxon>Bacteria</taxon>
        <taxon>Bacillati</taxon>
        <taxon>Bacillota</taxon>
        <taxon>Bacilli</taxon>
        <taxon>Lactobacillales</taxon>
        <taxon>Lactobacillaceae</taxon>
        <taxon>Lactobacillus</taxon>
    </lineage>
</organism>
<gene>
    <name type="primary">pepE</name>
    <name type="synonym">pepG</name>
</gene>
<feature type="chain" id="PRO_0000050598" description="Aminopeptidase E">
    <location>
        <begin position="1"/>
        <end position="438"/>
    </location>
</feature>
<feature type="active site" evidence="1">
    <location>
        <position position="70"/>
    </location>
</feature>
<feature type="active site" evidence="1">
    <location>
        <position position="362"/>
    </location>
</feature>
<feature type="active site" evidence="1">
    <location>
        <position position="383"/>
    </location>
</feature>
<protein>
    <recommendedName>
        <fullName>Aminopeptidase E</fullName>
        <ecNumber>3.4.22.-</ecNumber>
    </recommendedName>
</protein>
<dbReference type="EC" id="3.4.22.-"/>
<dbReference type="EMBL" id="U77050">
    <property type="protein sequence ID" value="AAB52540.1"/>
    <property type="molecule type" value="Genomic_DNA"/>
</dbReference>
<dbReference type="RefSeq" id="WP_003625562.1">
    <property type="nucleotide sequence ID" value="NZ_WCFT01000007.1"/>
</dbReference>
<dbReference type="SMR" id="P94870"/>
<dbReference type="MEROPS" id="C01.088"/>
<dbReference type="eggNOG" id="COG3579">
    <property type="taxonomic scope" value="Bacteria"/>
</dbReference>
<dbReference type="GO" id="GO:0005737">
    <property type="term" value="C:cytoplasm"/>
    <property type="evidence" value="ECO:0007669"/>
    <property type="project" value="UniProtKB-SubCell"/>
</dbReference>
<dbReference type="GO" id="GO:0070005">
    <property type="term" value="F:cysteine-type aminopeptidase activity"/>
    <property type="evidence" value="ECO:0007669"/>
    <property type="project" value="InterPro"/>
</dbReference>
<dbReference type="GO" id="GO:0043418">
    <property type="term" value="P:homocysteine catabolic process"/>
    <property type="evidence" value="ECO:0007669"/>
    <property type="project" value="TreeGrafter"/>
</dbReference>
<dbReference type="GO" id="GO:0006508">
    <property type="term" value="P:proteolysis"/>
    <property type="evidence" value="ECO:0007669"/>
    <property type="project" value="UniProtKB-KW"/>
</dbReference>
<dbReference type="GO" id="GO:0009636">
    <property type="term" value="P:response to toxic substance"/>
    <property type="evidence" value="ECO:0007669"/>
    <property type="project" value="TreeGrafter"/>
</dbReference>
<dbReference type="CDD" id="cd00585">
    <property type="entry name" value="Peptidase_C1B"/>
    <property type="match status" value="1"/>
</dbReference>
<dbReference type="Gene3D" id="3.90.70.10">
    <property type="entry name" value="Cysteine proteinases"/>
    <property type="match status" value="1"/>
</dbReference>
<dbReference type="InterPro" id="IPR038765">
    <property type="entry name" value="Papain-like_cys_pep_sf"/>
</dbReference>
<dbReference type="InterPro" id="IPR000169">
    <property type="entry name" value="Pept_cys_AS"/>
</dbReference>
<dbReference type="InterPro" id="IPR025660">
    <property type="entry name" value="Pept_his_AS"/>
</dbReference>
<dbReference type="InterPro" id="IPR004134">
    <property type="entry name" value="Peptidase_C1B"/>
</dbReference>
<dbReference type="PANTHER" id="PTHR10363">
    <property type="entry name" value="BLEOMYCIN HYDROLASE"/>
    <property type="match status" value="1"/>
</dbReference>
<dbReference type="PANTHER" id="PTHR10363:SF2">
    <property type="entry name" value="BLEOMYCIN HYDROLASE"/>
    <property type="match status" value="1"/>
</dbReference>
<dbReference type="Pfam" id="PF03051">
    <property type="entry name" value="Peptidase_C1_2"/>
    <property type="match status" value="1"/>
</dbReference>
<dbReference type="PIRSF" id="PIRSF005700">
    <property type="entry name" value="PepC"/>
    <property type="match status" value="1"/>
</dbReference>
<dbReference type="SUPFAM" id="SSF54001">
    <property type="entry name" value="Cysteine proteinases"/>
    <property type="match status" value="1"/>
</dbReference>
<dbReference type="PROSITE" id="PS00139">
    <property type="entry name" value="THIOL_PROTEASE_CYS"/>
    <property type="match status" value="1"/>
</dbReference>
<dbReference type="PROSITE" id="PS00639">
    <property type="entry name" value="THIOL_PROTEASE_HIS"/>
    <property type="match status" value="1"/>
</dbReference>
<proteinExistence type="evidence at protein level"/>
<keyword id="KW-0031">Aminopeptidase</keyword>
<keyword id="KW-0963">Cytoplasm</keyword>
<keyword id="KW-0378">Hydrolase</keyword>
<keyword id="KW-0645">Protease</keyword>
<keyword id="KW-0788">Thiol protease</keyword>
<name>PEPE_LACHE</name>